<keyword id="KW-0963">Cytoplasm</keyword>
<keyword id="KW-0489">Methyltransferase</keyword>
<keyword id="KW-0496">Mitochondrion</keyword>
<keyword id="KW-0539">Nucleus</keyword>
<keyword id="KW-1185">Reference proteome</keyword>
<keyword id="KW-0949">S-adenosyl-L-methionine</keyword>
<keyword id="KW-0808">Transferase</keyword>
<keyword id="KW-0819">tRNA processing</keyword>
<protein>
    <recommendedName>
        <fullName evidence="1">tRNA (guanine(37)-N(1))-methyltransferase</fullName>
        <ecNumber evidence="1">2.1.1.228</ecNumber>
    </recommendedName>
    <alternativeName>
        <fullName evidence="1">M1G-methyltransferase</fullName>
    </alternativeName>
    <alternativeName>
        <fullName evidence="1">tRNA [GM37] methyltransferase</fullName>
    </alternativeName>
    <alternativeName>
        <fullName evidence="1">tRNA methyltransferase 5 homolog</fullName>
    </alternativeName>
</protein>
<evidence type="ECO:0000255" key="1">
    <source>
        <dbReference type="HAMAP-Rule" id="MF_03152"/>
    </source>
</evidence>
<evidence type="ECO:0000256" key="2">
    <source>
        <dbReference type="SAM" id="MobiDB-lite"/>
    </source>
</evidence>
<evidence type="ECO:0000305" key="3"/>
<evidence type="ECO:0000312" key="4">
    <source>
        <dbReference type="EMBL" id="ETN59038.1"/>
    </source>
</evidence>
<sequence>MCADLLPPATVRGMEQLDRDAFAKTVRVPHLIIPEATNLNSAARALKQYLLKMEHYKPIRSEERKITLHPIPVKQWEDLPVEPLKELGIEKDCLVWEEIKLSYENYKYDLILKAVLPENQEGLSAFSKIGHIIHLNLKNHLMPYRRLIGEVLMDKVADCRTVVNKSNSIQNTYRNFEMELICGVPEYEVSIKENGCTYKFNFSRVYWNPRLSTEHQKITDMLEEGDLLYDLYAGVGPFTVPAAKRGCTVIANDLNPDSYSALVINCGLNKVMRNVKCYNMDAVDFIKVELRNDLLAKLADDKFQGNIHITMNLPAMAVEHLVHFPGLFSGESIELRIKPLVHVYCFAQGADDKKPIAQQKVEQWLGVEVTDMLKEITFVRNVAPNKDMMRVRNPSALGMAKKANKLKDQPKQLAKKAKNVFAVSQTKKGNLKKTKEVAAKLKKINVQDKREKVDANFKTLHAQIVAKKTPKPAPRPLPAKNKTTPDTNKMETDLTKLEMK</sequence>
<comment type="function">
    <text evidence="1">Specifically methylates the N1 position of guanosine-37 in various cytoplasmic and mitochondrial tRNAs. Methylation is not dependent on the nature of the nucleoside 5' of the target nucleoside. This is the first step in the biosynthesis of wybutosine (yW), a modified base adjacent to the anticodon of tRNAs and required for accurate decoding.</text>
</comment>
<comment type="catalytic activity">
    <reaction evidence="1">
        <text>guanosine(37) in tRNA + S-adenosyl-L-methionine = N(1)-methylguanosine(37) in tRNA + S-adenosyl-L-homocysteine + H(+)</text>
        <dbReference type="Rhea" id="RHEA:36899"/>
        <dbReference type="Rhea" id="RHEA-COMP:10145"/>
        <dbReference type="Rhea" id="RHEA-COMP:10147"/>
        <dbReference type="ChEBI" id="CHEBI:15378"/>
        <dbReference type="ChEBI" id="CHEBI:57856"/>
        <dbReference type="ChEBI" id="CHEBI:59789"/>
        <dbReference type="ChEBI" id="CHEBI:73542"/>
        <dbReference type="ChEBI" id="CHEBI:74269"/>
        <dbReference type="EC" id="2.1.1.228"/>
    </reaction>
</comment>
<comment type="subunit">
    <text evidence="1">Monomer.</text>
</comment>
<comment type="subcellular location">
    <subcellularLocation>
        <location evidence="1">Mitochondrion matrix</location>
    </subcellularLocation>
    <subcellularLocation>
        <location evidence="1">Nucleus</location>
    </subcellularLocation>
    <subcellularLocation>
        <location evidence="1">Cytoplasm</location>
    </subcellularLocation>
    <text evidence="1">Predominantly in the mitochondria and in the nucleus.</text>
</comment>
<comment type="similarity">
    <text evidence="3">Belongs to the class I-like SAM-binding methyltransferase superfamily. TRM5/TYW2 family.</text>
</comment>
<comment type="sequence caution" evidence="3">
    <conflict type="erroneous gene model prediction">
        <sequence resource="EMBL-CDS" id="ETN59038"/>
    </conflict>
</comment>
<proteinExistence type="inferred from homology"/>
<reference key="1">
    <citation type="journal article" date="2010" name="BMC Genomics">
        <title>Combination of measures distinguishes pre-miRNAs from other stem-loops in the genome of the newly sequenced Anopheles darlingi.</title>
        <authorList>
            <person name="Mendes N.D."/>
            <person name="Freitas A.T."/>
            <person name="Vasconcelos A.T."/>
            <person name="Sagot M.F."/>
        </authorList>
    </citation>
    <scope>NUCLEOTIDE SEQUENCE [LARGE SCALE GENOMIC DNA]</scope>
</reference>
<organism>
    <name type="scientific">Anopheles darlingi</name>
    <name type="common">Mosquito</name>
    <dbReference type="NCBI Taxonomy" id="43151"/>
    <lineage>
        <taxon>Eukaryota</taxon>
        <taxon>Metazoa</taxon>
        <taxon>Ecdysozoa</taxon>
        <taxon>Arthropoda</taxon>
        <taxon>Hexapoda</taxon>
        <taxon>Insecta</taxon>
        <taxon>Pterygota</taxon>
        <taxon>Neoptera</taxon>
        <taxon>Endopterygota</taxon>
        <taxon>Diptera</taxon>
        <taxon>Nematocera</taxon>
        <taxon>Culicoidea</taxon>
        <taxon>Culicidae</taxon>
        <taxon>Anophelinae</taxon>
        <taxon>Anopheles</taxon>
    </lineage>
</organism>
<dbReference type="EC" id="2.1.1.228" evidence="1"/>
<dbReference type="EMBL" id="ADMH02002104">
    <property type="protein sequence ID" value="ETN59038.1"/>
    <property type="status" value="ALT_SEQ"/>
    <property type="molecule type" value="Genomic_DNA"/>
</dbReference>
<dbReference type="SMR" id="E3WPP8"/>
<dbReference type="FunCoup" id="E3WPP8">
    <property type="interactions" value="1001"/>
</dbReference>
<dbReference type="STRING" id="43151.E3WPP8"/>
<dbReference type="VEuPathDB" id="VectorBase:ADAC009348"/>
<dbReference type="VEuPathDB" id="VectorBase:ADAR2_009216"/>
<dbReference type="eggNOG" id="KOG2078">
    <property type="taxonomic scope" value="Eukaryota"/>
</dbReference>
<dbReference type="InParanoid" id="E3WPP8"/>
<dbReference type="Proteomes" id="UP000000673">
    <property type="component" value="Unassembled WGS sequence"/>
</dbReference>
<dbReference type="GO" id="GO:0005759">
    <property type="term" value="C:mitochondrial matrix"/>
    <property type="evidence" value="ECO:0007669"/>
    <property type="project" value="UniProtKB-SubCell"/>
</dbReference>
<dbReference type="GO" id="GO:0005634">
    <property type="term" value="C:nucleus"/>
    <property type="evidence" value="ECO:0007669"/>
    <property type="project" value="UniProtKB-SubCell"/>
</dbReference>
<dbReference type="GO" id="GO:0052906">
    <property type="term" value="F:tRNA (guanine(37)-N1)-methyltransferase activity"/>
    <property type="evidence" value="ECO:0007669"/>
    <property type="project" value="UniProtKB-UniRule"/>
</dbReference>
<dbReference type="GO" id="GO:0070901">
    <property type="term" value="P:mitochondrial tRNA methylation"/>
    <property type="evidence" value="ECO:0007669"/>
    <property type="project" value="TreeGrafter"/>
</dbReference>
<dbReference type="GO" id="GO:0002939">
    <property type="term" value="P:tRNA N1-guanine methylation"/>
    <property type="evidence" value="ECO:0007669"/>
    <property type="project" value="TreeGrafter"/>
</dbReference>
<dbReference type="CDD" id="cd02440">
    <property type="entry name" value="AdoMet_MTases"/>
    <property type="match status" value="1"/>
</dbReference>
<dbReference type="FunFam" id="3.30.300.110:FF:000001">
    <property type="entry name" value="tRNA (guanine(37)-N1)-methyltransferase"/>
    <property type="match status" value="1"/>
</dbReference>
<dbReference type="Gene3D" id="3.30.300.110">
    <property type="entry name" value="Met-10+ protein-like domains"/>
    <property type="match status" value="1"/>
</dbReference>
<dbReference type="Gene3D" id="3.40.50.150">
    <property type="entry name" value="Vaccinia Virus protein VP39"/>
    <property type="match status" value="1"/>
</dbReference>
<dbReference type="HAMAP" id="MF_03152">
    <property type="entry name" value="TRM5"/>
    <property type="match status" value="1"/>
</dbReference>
<dbReference type="InterPro" id="IPR030382">
    <property type="entry name" value="MeTrfase_TRM5/TYW2"/>
</dbReference>
<dbReference type="InterPro" id="IPR029063">
    <property type="entry name" value="SAM-dependent_MTases_sf"/>
</dbReference>
<dbReference type="InterPro" id="IPR056743">
    <property type="entry name" value="TRM5-TYW2-like_MTfase"/>
</dbReference>
<dbReference type="InterPro" id="IPR056744">
    <property type="entry name" value="TRM5/TYW2-like_N"/>
</dbReference>
<dbReference type="InterPro" id="IPR025792">
    <property type="entry name" value="tRNA_Gua_MeTrfase_euk"/>
</dbReference>
<dbReference type="PANTHER" id="PTHR23245:SF36">
    <property type="entry name" value="TRNA (GUANINE(37)-N1)-METHYLTRANSFERASE"/>
    <property type="match status" value="1"/>
</dbReference>
<dbReference type="PANTHER" id="PTHR23245">
    <property type="entry name" value="TRNA METHYLTRANSFERASE"/>
    <property type="match status" value="1"/>
</dbReference>
<dbReference type="Pfam" id="PF02475">
    <property type="entry name" value="TRM5-TYW2_MTfase"/>
    <property type="match status" value="1"/>
</dbReference>
<dbReference type="Pfam" id="PF25133">
    <property type="entry name" value="TYW2_N_2"/>
    <property type="match status" value="1"/>
</dbReference>
<dbReference type="SUPFAM" id="SSF53335">
    <property type="entry name" value="S-adenosyl-L-methionine-dependent methyltransferases"/>
    <property type="match status" value="1"/>
</dbReference>
<dbReference type="PROSITE" id="PS51684">
    <property type="entry name" value="SAM_MT_TRM5_TYW2"/>
    <property type="match status" value="1"/>
</dbReference>
<feature type="chain" id="PRO_0000414127" description="tRNA (guanine(37)-N(1))-methyltransferase">
    <location>
        <begin position="1"/>
        <end position="500"/>
    </location>
</feature>
<feature type="region of interest" description="Disordered" evidence="2">
    <location>
        <begin position="463"/>
        <end position="500"/>
    </location>
</feature>
<feature type="compositionally biased region" description="Basic and acidic residues" evidence="2">
    <location>
        <begin position="488"/>
        <end position="500"/>
    </location>
</feature>
<feature type="binding site" evidence="1">
    <location>
        <position position="215"/>
    </location>
    <ligand>
        <name>S-adenosyl-L-methionine</name>
        <dbReference type="ChEBI" id="CHEBI:59789"/>
    </ligand>
</feature>
<feature type="binding site" evidence="1">
    <location>
        <begin position="253"/>
        <end position="254"/>
    </location>
    <ligand>
        <name>S-adenosyl-L-methionine</name>
        <dbReference type="ChEBI" id="CHEBI:59789"/>
    </ligand>
</feature>
<feature type="binding site" evidence="1">
    <location>
        <begin position="281"/>
        <end position="282"/>
    </location>
    <ligand>
        <name>S-adenosyl-L-methionine</name>
        <dbReference type="ChEBI" id="CHEBI:59789"/>
    </ligand>
</feature>
<feature type="binding site" evidence="1">
    <location>
        <position position="312"/>
    </location>
    <ligand>
        <name>S-adenosyl-L-methionine</name>
        <dbReference type="ChEBI" id="CHEBI:59789"/>
    </ligand>
</feature>
<gene>
    <name evidence="4" type="ORF">AND_009348</name>
</gene>
<accession>E3WPP8</accession>
<accession>W5J6L0</accession>
<name>TRM5_ANODA</name>